<sequence>MRIIMLGAPGAGKGTQAQFITERFEIPQISTGDMLRAAVKAESELGLQVKEVMASGGLVSDDIIIALIEERIQQPDCKNGFLLDGFPRTIPQAEALKDQGIAIDYVVEISVEDEEIVSRLSGRRVHEGSGRIYHVKYDPPKVEGKDDETGEALIQREDDKEETVRKRLKIYHEQTAPLVGFYQSWAEKAPADAPRYVRVEGVGSLDSIRDQILSQLK</sequence>
<gene>
    <name evidence="1" type="primary">adk</name>
    <name type="ordered locus">Maqu_2232</name>
</gene>
<proteinExistence type="inferred from homology"/>
<protein>
    <recommendedName>
        <fullName evidence="1">Adenylate kinase</fullName>
        <shortName evidence="1">AK</shortName>
        <ecNumber evidence="1">2.7.4.3</ecNumber>
    </recommendedName>
    <alternativeName>
        <fullName evidence="1">ATP-AMP transphosphorylase</fullName>
    </alternativeName>
    <alternativeName>
        <fullName evidence="1">ATP:AMP phosphotransferase</fullName>
    </alternativeName>
    <alternativeName>
        <fullName evidence="1">Adenylate monophosphate kinase</fullName>
    </alternativeName>
</protein>
<comment type="function">
    <text evidence="1">Catalyzes the reversible transfer of the terminal phosphate group between ATP and AMP. Plays an important role in cellular energy homeostasis and in adenine nucleotide metabolism.</text>
</comment>
<comment type="catalytic activity">
    <reaction evidence="1">
        <text>AMP + ATP = 2 ADP</text>
        <dbReference type="Rhea" id="RHEA:12973"/>
        <dbReference type="ChEBI" id="CHEBI:30616"/>
        <dbReference type="ChEBI" id="CHEBI:456215"/>
        <dbReference type="ChEBI" id="CHEBI:456216"/>
        <dbReference type="EC" id="2.7.4.3"/>
    </reaction>
</comment>
<comment type="pathway">
    <text evidence="1">Purine metabolism; AMP biosynthesis via salvage pathway; AMP from ADP: step 1/1.</text>
</comment>
<comment type="subunit">
    <text evidence="1">Monomer.</text>
</comment>
<comment type="subcellular location">
    <subcellularLocation>
        <location evidence="1">Cytoplasm</location>
    </subcellularLocation>
</comment>
<comment type="domain">
    <text evidence="1">Consists of three domains, a large central CORE domain and two small peripheral domains, NMPbind and LID, which undergo movements during catalysis. The LID domain closes over the site of phosphoryl transfer upon ATP binding. Assembling and dissambling the active center during each catalytic cycle provides an effective means to prevent ATP hydrolysis.</text>
</comment>
<comment type="similarity">
    <text evidence="1">Belongs to the adenylate kinase family.</text>
</comment>
<reference key="1">
    <citation type="journal article" date="2011" name="Appl. Environ. Microbiol.">
        <title>Genomic potential of Marinobacter aquaeolei, a biogeochemical 'opportunitroph'.</title>
        <authorList>
            <person name="Singer E."/>
            <person name="Webb E.A."/>
            <person name="Nelson W.C."/>
            <person name="Heidelberg J.F."/>
            <person name="Ivanova N."/>
            <person name="Pati A."/>
            <person name="Edwards K.J."/>
        </authorList>
    </citation>
    <scope>NUCLEOTIDE SEQUENCE [LARGE SCALE GENOMIC DNA]</scope>
    <source>
        <strain>ATCC 700491 / DSM 11845 / VT8</strain>
    </source>
</reference>
<feature type="chain" id="PRO_1000021742" description="Adenylate kinase">
    <location>
        <begin position="1"/>
        <end position="217"/>
    </location>
</feature>
<feature type="region of interest" description="NMP" evidence="1">
    <location>
        <begin position="30"/>
        <end position="59"/>
    </location>
</feature>
<feature type="region of interest" description="LID" evidence="1">
    <location>
        <begin position="122"/>
        <end position="159"/>
    </location>
</feature>
<feature type="binding site" evidence="1">
    <location>
        <begin position="10"/>
        <end position="15"/>
    </location>
    <ligand>
        <name>ATP</name>
        <dbReference type="ChEBI" id="CHEBI:30616"/>
    </ligand>
</feature>
<feature type="binding site" evidence="1">
    <location>
        <position position="31"/>
    </location>
    <ligand>
        <name>AMP</name>
        <dbReference type="ChEBI" id="CHEBI:456215"/>
    </ligand>
</feature>
<feature type="binding site" evidence="1">
    <location>
        <position position="36"/>
    </location>
    <ligand>
        <name>AMP</name>
        <dbReference type="ChEBI" id="CHEBI:456215"/>
    </ligand>
</feature>
<feature type="binding site" evidence="1">
    <location>
        <begin position="57"/>
        <end position="59"/>
    </location>
    <ligand>
        <name>AMP</name>
        <dbReference type="ChEBI" id="CHEBI:456215"/>
    </ligand>
</feature>
<feature type="binding site" evidence="1">
    <location>
        <begin position="85"/>
        <end position="88"/>
    </location>
    <ligand>
        <name>AMP</name>
        <dbReference type="ChEBI" id="CHEBI:456215"/>
    </ligand>
</feature>
<feature type="binding site" evidence="1">
    <location>
        <position position="92"/>
    </location>
    <ligand>
        <name>AMP</name>
        <dbReference type="ChEBI" id="CHEBI:456215"/>
    </ligand>
</feature>
<feature type="binding site" evidence="1">
    <location>
        <position position="123"/>
    </location>
    <ligand>
        <name>ATP</name>
        <dbReference type="ChEBI" id="CHEBI:30616"/>
    </ligand>
</feature>
<feature type="binding site" evidence="1">
    <location>
        <begin position="132"/>
        <end position="133"/>
    </location>
    <ligand>
        <name>ATP</name>
        <dbReference type="ChEBI" id="CHEBI:30616"/>
    </ligand>
</feature>
<feature type="binding site" evidence="1">
    <location>
        <position position="156"/>
    </location>
    <ligand>
        <name>AMP</name>
        <dbReference type="ChEBI" id="CHEBI:456215"/>
    </ligand>
</feature>
<feature type="binding site" evidence="1">
    <location>
        <position position="167"/>
    </location>
    <ligand>
        <name>AMP</name>
        <dbReference type="ChEBI" id="CHEBI:456215"/>
    </ligand>
</feature>
<feature type="binding site" evidence="1">
    <location>
        <position position="203"/>
    </location>
    <ligand>
        <name>ATP</name>
        <dbReference type="ChEBI" id="CHEBI:30616"/>
    </ligand>
</feature>
<name>KAD_MARN8</name>
<organism>
    <name type="scientific">Marinobacter nauticus (strain ATCC 700491 / DSM 11845 / VT8)</name>
    <name type="common">Marinobacter aquaeolei</name>
    <dbReference type="NCBI Taxonomy" id="351348"/>
    <lineage>
        <taxon>Bacteria</taxon>
        <taxon>Pseudomonadati</taxon>
        <taxon>Pseudomonadota</taxon>
        <taxon>Gammaproteobacteria</taxon>
        <taxon>Pseudomonadales</taxon>
        <taxon>Marinobacteraceae</taxon>
        <taxon>Marinobacter</taxon>
    </lineage>
</organism>
<accession>A1U2U2</accession>
<dbReference type="EC" id="2.7.4.3" evidence="1"/>
<dbReference type="EMBL" id="CP000514">
    <property type="protein sequence ID" value="ABM19311.1"/>
    <property type="molecule type" value="Genomic_DNA"/>
</dbReference>
<dbReference type="RefSeq" id="WP_011785699.1">
    <property type="nucleotide sequence ID" value="NC_008740.1"/>
</dbReference>
<dbReference type="SMR" id="A1U2U2"/>
<dbReference type="STRING" id="351348.Maqu_2232"/>
<dbReference type="GeneID" id="31820487"/>
<dbReference type="KEGG" id="maq:Maqu_2232"/>
<dbReference type="eggNOG" id="COG0563">
    <property type="taxonomic scope" value="Bacteria"/>
</dbReference>
<dbReference type="HOGENOM" id="CLU_032354_1_2_6"/>
<dbReference type="OrthoDB" id="9805030at2"/>
<dbReference type="UniPathway" id="UPA00588">
    <property type="reaction ID" value="UER00649"/>
</dbReference>
<dbReference type="Proteomes" id="UP000000998">
    <property type="component" value="Chromosome"/>
</dbReference>
<dbReference type="GO" id="GO:0005737">
    <property type="term" value="C:cytoplasm"/>
    <property type="evidence" value="ECO:0007669"/>
    <property type="project" value="UniProtKB-SubCell"/>
</dbReference>
<dbReference type="GO" id="GO:0004017">
    <property type="term" value="F:adenylate kinase activity"/>
    <property type="evidence" value="ECO:0007669"/>
    <property type="project" value="UniProtKB-UniRule"/>
</dbReference>
<dbReference type="GO" id="GO:0005524">
    <property type="term" value="F:ATP binding"/>
    <property type="evidence" value="ECO:0007669"/>
    <property type="project" value="UniProtKB-UniRule"/>
</dbReference>
<dbReference type="GO" id="GO:0044209">
    <property type="term" value="P:AMP salvage"/>
    <property type="evidence" value="ECO:0007669"/>
    <property type="project" value="UniProtKB-UniRule"/>
</dbReference>
<dbReference type="CDD" id="cd01428">
    <property type="entry name" value="ADK"/>
    <property type="match status" value="1"/>
</dbReference>
<dbReference type="FunFam" id="3.40.50.300:FF:000106">
    <property type="entry name" value="Adenylate kinase mitochondrial"/>
    <property type="match status" value="1"/>
</dbReference>
<dbReference type="Gene3D" id="3.40.50.300">
    <property type="entry name" value="P-loop containing nucleotide triphosphate hydrolases"/>
    <property type="match status" value="1"/>
</dbReference>
<dbReference type="HAMAP" id="MF_00235">
    <property type="entry name" value="Adenylate_kinase_Adk"/>
    <property type="match status" value="1"/>
</dbReference>
<dbReference type="InterPro" id="IPR006259">
    <property type="entry name" value="Adenyl_kin_sub"/>
</dbReference>
<dbReference type="InterPro" id="IPR000850">
    <property type="entry name" value="Adenylat/UMP-CMP_kin"/>
</dbReference>
<dbReference type="InterPro" id="IPR033690">
    <property type="entry name" value="Adenylat_kinase_CS"/>
</dbReference>
<dbReference type="InterPro" id="IPR007862">
    <property type="entry name" value="Adenylate_kinase_lid-dom"/>
</dbReference>
<dbReference type="InterPro" id="IPR027417">
    <property type="entry name" value="P-loop_NTPase"/>
</dbReference>
<dbReference type="NCBIfam" id="TIGR01351">
    <property type="entry name" value="adk"/>
    <property type="match status" value="1"/>
</dbReference>
<dbReference type="NCBIfam" id="NF001379">
    <property type="entry name" value="PRK00279.1-1"/>
    <property type="match status" value="1"/>
</dbReference>
<dbReference type="NCBIfam" id="NF001380">
    <property type="entry name" value="PRK00279.1-2"/>
    <property type="match status" value="1"/>
</dbReference>
<dbReference type="NCBIfam" id="NF001381">
    <property type="entry name" value="PRK00279.1-3"/>
    <property type="match status" value="1"/>
</dbReference>
<dbReference type="PANTHER" id="PTHR23359">
    <property type="entry name" value="NUCLEOTIDE KINASE"/>
    <property type="match status" value="1"/>
</dbReference>
<dbReference type="Pfam" id="PF00406">
    <property type="entry name" value="ADK"/>
    <property type="match status" value="1"/>
</dbReference>
<dbReference type="Pfam" id="PF05191">
    <property type="entry name" value="ADK_lid"/>
    <property type="match status" value="1"/>
</dbReference>
<dbReference type="PRINTS" id="PR00094">
    <property type="entry name" value="ADENYLTKNASE"/>
</dbReference>
<dbReference type="SUPFAM" id="SSF52540">
    <property type="entry name" value="P-loop containing nucleoside triphosphate hydrolases"/>
    <property type="match status" value="1"/>
</dbReference>
<dbReference type="PROSITE" id="PS00113">
    <property type="entry name" value="ADENYLATE_KINASE"/>
    <property type="match status" value="1"/>
</dbReference>
<keyword id="KW-0067">ATP-binding</keyword>
<keyword id="KW-0963">Cytoplasm</keyword>
<keyword id="KW-0418">Kinase</keyword>
<keyword id="KW-0545">Nucleotide biosynthesis</keyword>
<keyword id="KW-0547">Nucleotide-binding</keyword>
<keyword id="KW-0808">Transferase</keyword>
<evidence type="ECO:0000255" key="1">
    <source>
        <dbReference type="HAMAP-Rule" id="MF_00235"/>
    </source>
</evidence>